<evidence type="ECO:0000250" key="1"/>
<evidence type="ECO:0000255" key="2"/>
<evidence type="ECO:0000256" key="3">
    <source>
        <dbReference type="SAM" id="MobiDB-lite"/>
    </source>
</evidence>
<evidence type="ECO:0000305" key="4"/>
<comment type="function">
    <text evidence="1">The M ring may be actively involved in energy transduction.</text>
</comment>
<comment type="subunit">
    <text evidence="1">The basal body constitutes a major portion of the flagellar organelle and consists of five rings (E,L,P,S, and M) mounted on a central rod. The M ring is integral to the inner membrane of the cell and may be connected to the flagellar rod via the S ring. The S (supramembrane ring) lies just distal to the M ring. The L and P rings lie in the outer membrane and the periplasmic space, respectively (By similarity).</text>
</comment>
<comment type="subcellular location">
    <subcellularLocation>
        <location evidence="1">Cell inner membrane</location>
        <topology evidence="1">Multi-pass membrane protein</topology>
    </subcellularLocation>
    <subcellularLocation>
        <location evidence="1">Bacterial flagellum basal body</location>
    </subcellularLocation>
</comment>
<comment type="similarity">
    <text evidence="4">Belongs to the FliF family.</text>
</comment>
<feature type="chain" id="PRO_0000180885" description="Flagellar M-ring protein">
    <location>
        <begin position="1"/>
        <end position="557"/>
    </location>
</feature>
<feature type="transmembrane region" description="Helical" evidence="2">
    <location>
        <begin position="23"/>
        <end position="43"/>
    </location>
</feature>
<feature type="transmembrane region" description="Helical" evidence="2">
    <location>
        <begin position="436"/>
        <end position="456"/>
    </location>
</feature>
<feature type="region of interest" description="Disordered" evidence="3">
    <location>
        <begin position="279"/>
        <end position="337"/>
    </location>
</feature>
<feature type="compositionally biased region" description="Basic and acidic residues" evidence="3">
    <location>
        <begin position="280"/>
        <end position="296"/>
    </location>
</feature>
<feature type="compositionally biased region" description="Polar residues" evidence="3">
    <location>
        <begin position="297"/>
        <end position="313"/>
    </location>
</feature>
<feature type="sequence conflict" description="In Ref. 1; CAA11947." evidence="4" ref="1">
    <original>P</original>
    <variation>R</variation>
    <location>
        <position position="46"/>
    </location>
</feature>
<feature type="sequence conflict" description="In Ref. 1; CAA11947." evidence="4" ref="1">
    <original>A</original>
    <variation>G</variation>
    <location>
        <position position="139"/>
    </location>
</feature>
<keyword id="KW-0975">Bacterial flagellum</keyword>
<keyword id="KW-0997">Cell inner membrane</keyword>
<keyword id="KW-1003">Cell membrane</keyword>
<keyword id="KW-0472">Membrane</keyword>
<keyword id="KW-1185">Reference proteome</keyword>
<keyword id="KW-0812">Transmembrane</keyword>
<keyword id="KW-1133">Transmembrane helix</keyword>
<organism>
    <name type="scientific">Rhizobium meliloti (strain 1021)</name>
    <name type="common">Ensifer meliloti</name>
    <name type="synonym">Sinorhizobium meliloti</name>
    <dbReference type="NCBI Taxonomy" id="266834"/>
    <lineage>
        <taxon>Bacteria</taxon>
        <taxon>Pseudomonadati</taxon>
        <taxon>Pseudomonadota</taxon>
        <taxon>Alphaproteobacteria</taxon>
        <taxon>Hyphomicrobiales</taxon>
        <taxon>Rhizobiaceae</taxon>
        <taxon>Sinorhizobium/Ensifer group</taxon>
        <taxon>Sinorhizobium</taxon>
    </lineage>
</organism>
<reference key="1">
    <citation type="journal article" date="1998" name="Gene">
        <title>Mapping of 41 chemotaxis, flagellar and motility genes to a single region of the Sinorhizobium meliloti chromosome.</title>
        <authorList>
            <person name="Sourjik V."/>
            <person name="Sterr W."/>
            <person name="Platzer J."/>
            <person name="Bos I."/>
            <person name="Haslbeck M."/>
            <person name="Schmitt R."/>
        </authorList>
    </citation>
    <scope>NUCLEOTIDE SEQUENCE [GENOMIC DNA]</scope>
    <source>
        <strain>RU11/001</strain>
    </source>
</reference>
<reference key="2">
    <citation type="journal article" date="2001" name="Proc. Natl. Acad. Sci. U.S.A.">
        <title>Analysis of the chromosome sequence of the legume symbiont Sinorhizobium meliloti strain 1021.</title>
        <authorList>
            <person name="Capela D."/>
            <person name="Barloy-Hubler F."/>
            <person name="Gouzy J."/>
            <person name="Bothe G."/>
            <person name="Ampe F."/>
            <person name="Batut J."/>
            <person name="Boistard P."/>
            <person name="Becker A."/>
            <person name="Boutry M."/>
            <person name="Cadieu E."/>
            <person name="Dreano S."/>
            <person name="Gloux S."/>
            <person name="Godrie T."/>
            <person name="Goffeau A."/>
            <person name="Kahn D."/>
            <person name="Kiss E."/>
            <person name="Lelaure V."/>
            <person name="Masuy D."/>
            <person name="Pohl T."/>
            <person name="Portetelle D."/>
            <person name="Puehler A."/>
            <person name="Purnelle B."/>
            <person name="Ramsperger U."/>
            <person name="Renard C."/>
            <person name="Thebault P."/>
            <person name="Vandenbol M."/>
            <person name="Weidner S."/>
            <person name="Galibert F."/>
        </authorList>
    </citation>
    <scope>NUCLEOTIDE SEQUENCE [LARGE SCALE GENOMIC DNA]</scope>
    <source>
        <strain>1021</strain>
    </source>
</reference>
<reference key="3">
    <citation type="journal article" date="2001" name="Science">
        <title>The composite genome of the legume symbiont Sinorhizobium meliloti.</title>
        <authorList>
            <person name="Galibert F."/>
            <person name="Finan T.M."/>
            <person name="Long S.R."/>
            <person name="Puehler A."/>
            <person name="Abola P."/>
            <person name="Ampe F."/>
            <person name="Barloy-Hubler F."/>
            <person name="Barnett M.J."/>
            <person name="Becker A."/>
            <person name="Boistard P."/>
            <person name="Bothe G."/>
            <person name="Boutry M."/>
            <person name="Bowser L."/>
            <person name="Buhrmester J."/>
            <person name="Cadieu E."/>
            <person name="Capela D."/>
            <person name="Chain P."/>
            <person name="Cowie A."/>
            <person name="Davis R.W."/>
            <person name="Dreano S."/>
            <person name="Federspiel N.A."/>
            <person name="Fisher R.F."/>
            <person name="Gloux S."/>
            <person name="Godrie T."/>
            <person name="Goffeau A."/>
            <person name="Golding B."/>
            <person name="Gouzy J."/>
            <person name="Gurjal M."/>
            <person name="Hernandez-Lucas I."/>
            <person name="Hong A."/>
            <person name="Huizar L."/>
            <person name="Hyman R.W."/>
            <person name="Jones T."/>
            <person name="Kahn D."/>
            <person name="Kahn M.L."/>
            <person name="Kalman S."/>
            <person name="Keating D.H."/>
            <person name="Kiss E."/>
            <person name="Komp C."/>
            <person name="Lelaure V."/>
            <person name="Masuy D."/>
            <person name="Palm C."/>
            <person name="Peck M.C."/>
            <person name="Pohl T.M."/>
            <person name="Portetelle D."/>
            <person name="Purnelle B."/>
            <person name="Ramsperger U."/>
            <person name="Surzycki R."/>
            <person name="Thebault P."/>
            <person name="Vandenbol M."/>
            <person name="Vorhoelter F.J."/>
            <person name="Weidner S."/>
            <person name="Wells D.H."/>
            <person name="Wong K."/>
            <person name="Yeh K.-C."/>
            <person name="Batut J."/>
        </authorList>
    </citation>
    <scope>NUCLEOTIDE SEQUENCE [LARGE SCALE GENOMIC DNA]</scope>
    <source>
        <strain>1021</strain>
    </source>
</reference>
<name>FLIF_RHIME</name>
<proteinExistence type="inferred from homology"/>
<accession>O54239</accession>
<protein>
    <recommendedName>
        <fullName>Flagellar M-ring protein</fullName>
    </recommendedName>
</protein>
<sequence length="557" mass="59090">MNLFDQFSTFTKNLSNLGQGKLIALAVAGVVAIGFVLGAGIYVNRPSFETLYVGLERSDVTQISIALAEANVDFEVGTDGGSIQVPVGMTGKARLLLAERGLPSSANAGYELFDNVGSLGLTSFMQEVTRVRALEGEIARTIQQISGIAAARVHIVMPERGSFRKAEQTPTASVMIRASATVGRSAASSIRHLVASSVPGLDVDDVTVLDSTGQLLASGDDPSNSALNQSLGVVQNVQSDLEKKIDNALAPFLGMDNFRTSVTARLNTDAQQIQETVFDPESRVERSTRVIKEEQKSSQQQPDNAATVQQNVPQAAPRGGAGQQSSDEAEKKEEQTNYEINSKTIATVKNSYSIERLSIAVVVNRGRLAAMAGEPADQAKIDAYLQEMQKIVSSAAGIDPGRGDVVTLNAMDFVETQLLDQAVPGPGIMEMLTRNLGGIINALAFVAVAFLVVWFGMRPLARQLGFGGQAGKLEGEAAGLELPDFSPAGAGAGGALMEGFGSDFGFDGGDDLLNLGDEAGFNRRVKEGPERRLARMVEISEERAAKILRKWAVDRAA</sequence>
<dbReference type="EMBL" id="AJ224445">
    <property type="protein sequence ID" value="CAA11947.1"/>
    <property type="molecule type" value="Genomic_DNA"/>
</dbReference>
<dbReference type="EMBL" id="AL591688">
    <property type="protein sequence ID" value="CAC45218.1"/>
    <property type="molecule type" value="Genomic_DNA"/>
</dbReference>
<dbReference type="RefSeq" id="NP_384752.1">
    <property type="nucleotide sequence ID" value="NC_003047.1"/>
</dbReference>
<dbReference type="RefSeq" id="WP_010968722.1">
    <property type="nucleotide sequence ID" value="NC_003047.1"/>
</dbReference>
<dbReference type="SMR" id="O54239"/>
<dbReference type="EnsemblBacteria" id="CAC45218">
    <property type="protein sequence ID" value="CAC45218"/>
    <property type="gene ID" value="SMc03014"/>
</dbReference>
<dbReference type="GeneID" id="89574949"/>
<dbReference type="KEGG" id="sme:SMc03014"/>
<dbReference type="PATRIC" id="fig|266834.11.peg.2019"/>
<dbReference type="eggNOG" id="COG1766">
    <property type="taxonomic scope" value="Bacteria"/>
</dbReference>
<dbReference type="HOGENOM" id="CLU_028108_4_0_5"/>
<dbReference type="OrthoDB" id="9807026at2"/>
<dbReference type="Proteomes" id="UP000001976">
    <property type="component" value="Chromosome"/>
</dbReference>
<dbReference type="GO" id="GO:0009431">
    <property type="term" value="C:bacterial-type flagellum basal body, MS ring"/>
    <property type="evidence" value="ECO:0007669"/>
    <property type="project" value="InterPro"/>
</dbReference>
<dbReference type="GO" id="GO:0005886">
    <property type="term" value="C:plasma membrane"/>
    <property type="evidence" value="ECO:0007669"/>
    <property type="project" value="UniProtKB-SubCell"/>
</dbReference>
<dbReference type="GO" id="GO:0003774">
    <property type="term" value="F:cytoskeletal motor activity"/>
    <property type="evidence" value="ECO:0007669"/>
    <property type="project" value="InterPro"/>
</dbReference>
<dbReference type="GO" id="GO:0071973">
    <property type="term" value="P:bacterial-type flagellum-dependent cell motility"/>
    <property type="evidence" value="ECO:0007669"/>
    <property type="project" value="InterPro"/>
</dbReference>
<dbReference type="Gene3D" id="3.30.300.30">
    <property type="match status" value="1"/>
</dbReference>
<dbReference type="InterPro" id="IPR045851">
    <property type="entry name" value="AMP-bd_C_sf"/>
</dbReference>
<dbReference type="InterPro" id="IPR013556">
    <property type="entry name" value="Flag_M-ring_C"/>
</dbReference>
<dbReference type="InterPro" id="IPR000067">
    <property type="entry name" value="FlgMring_FliF"/>
</dbReference>
<dbReference type="InterPro" id="IPR006182">
    <property type="entry name" value="FliF_N_dom"/>
</dbReference>
<dbReference type="InterPro" id="IPR043427">
    <property type="entry name" value="YscJ/FliF"/>
</dbReference>
<dbReference type="NCBIfam" id="TIGR00206">
    <property type="entry name" value="fliF"/>
    <property type="match status" value="1"/>
</dbReference>
<dbReference type="PANTHER" id="PTHR30046">
    <property type="entry name" value="FLAGELLAR M-RING PROTEIN"/>
    <property type="match status" value="1"/>
</dbReference>
<dbReference type="PANTHER" id="PTHR30046:SF0">
    <property type="entry name" value="FLAGELLAR M-RING PROTEIN"/>
    <property type="match status" value="1"/>
</dbReference>
<dbReference type="Pfam" id="PF01514">
    <property type="entry name" value="YscJ_FliF"/>
    <property type="match status" value="1"/>
</dbReference>
<dbReference type="Pfam" id="PF08345">
    <property type="entry name" value="YscJ_FliF_C"/>
    <property type="match status" value="1"/>
</dbReference>
<dbReference type="PIRSF" id="PIRSF004862">
    <property type="entry name" value="FliF"/>
    <property type="match status" value="1"/>
</dbReference>
<dbReference type="PRINTS" id="PR01009">
    <property type="entry name" value="FLGMRINGFLIF"/>
</dbReference>
<gene>
    <name type="primary">fliF</name>
    <name type="ordered locus">R00646</name>
    <name type="ORF">SMc03014</name>
</gene>